<comment type="function">
    <text evidence="5 7">Seed storage protein (Probable). Globulin-like protein that acts as a zinc metalloprotease. Cleaves specifically between Leu-15 and Tyr-16 of insulin B chain, and Gln-1 and Leu-2 of neurotensin (NT) peptide in vitro. May play a role as an initiating endopeptidase in germinating seeds (PubMed:27064905).</text>
</comment>
<comment type="cofactor">
    <cofactor evidence="5">
        <name>Zn(2+)</name>
        <dbReference type="ChEBI" id="CHEBI:29105"/>
    </cofactor>
</comment>
<comment type="biophysicochemical properties">
    <phDependence>
        <text evidence="5">Optimum pH is 4.0.</text>
    </phDependence>
    <temperatureDependence>
        <text evidence="5">Optimum temperature is 55 degrees Celsius.</text>
    </temperatureDependence>
</comment>
<comment type="subunit">
    <text evidence="8">Homotrimer.</text>
</comment>
<comment type="subcellular location">
    <subcellularLocation>
        <location evidence="7">Secreted</location>
    </subcellularLocation>
</comment>
<comment type="allergen">
    <text evidence="4">Causes an allergic reaction in human. Binds to IgE.</text>
</comment>
<comment type="similarity">
    <text evidence="7">Belongs to the 7S seed storage protein family.</text>
</comment>
<dbReference type="EC" id="3.4.-.-" evidence="7"/>
<dbReference type="EMBL" id="CM000128">
    <property type="protein sequence ID" value="EEC76319.1"/>
    <property type="molecule type" value="Genomic_DNA"/>
</dbReference>
<dbReference type="SMR" id="B8AL97"/>
<dbReference type="STRING" id="39946.B8AL97"/>
<dbReference type="EnsemblPlants" id="BGIOSGA013715-TA">
    <property type="protein sequence ID" value="BGIOSGA013715-PA"/>
    <property type="gene ID" value="BGIOSGA013715"/>
</dbReference>
<dbReference type="Gramene" id="BGIOSGA013715-TA">
    <property type="protein sequence ID" value="BGIOSGA013715-PA"/>
    <property type="gene ID" value="BGIOSGA013715"/>
</dbReference>
<dbReference type="HOGENOM" id="CLU_018703_2_0_1"/>
<dbReference type="OMA" id="FRHWTRT"/>
<dbReference type="Proteomes" id="UP000007015">
    <property type="component" value="Chromosome 3"/>
</dbReference>
<dbReference type="GO" id="GO:0005615">
    <property type="term" value="C:extracellular space"/>
    <property type="evidence" value="ECO:0000314"/>
    <property type="project" value="UniProtKB"/>
</dbReference>
<dbReference type="GO" id="GO:0019863">
    <property type="term" value="F:IgE binding"/>
    <property type="evidence" value="ECO:0000314"/>
    <property type="project" value="UniProtKB"/>
</dbReference>
<dbReference type="GO" id="GO:0004222">
    <property type="term" value="F:metalloendopeptidase activity"/>
    <property type="evidence" value="ECO:0000314"/>
    <property type="project" value="UniProtKB"/>
</dbReference>
<dbReference type="GO" id="GO:0045735">
    <property type="term" value="F:nutrient reservoir activity"/>
    <property type="evidence" value="ECO:0007669"/>
    <property type="project" value="UniProtKB-KW"/>
</dbReference>
<dbReference type="GO" id="GO:0008270">
    <property type="term" value="F:zinc ion binding"/>
    <property type="evidence" value="ECO:0000314"/>
    <property type="project" value="UniProtKB"/>
</dbReference>
<dbReference type="GO" id="GO:0070207">
    <property type="term" value="P:protein homotrimerization"/>
    <property type="evidence" value="ECO:0000353"/>
    <property type="project" value="UniProtKB"/>
</dbReference>
<dbReference type="GO" id="GO:0006508">
    <property type="term" value="P:proteolysis"/>
    <property type="evidence" value="ECO:0007669"/>
    <property type="project" value="UniProtKB-KW"/>
</dbReference>
<dbReference type="CDD" id="cd02245">
    <property type="entry name" value="cupin_7S_vicilin-like_C"/>
    <property type="match status" value="1"/>
</dbReference>
<dbReference type="CDD" id="cd02244">
    <property type="entry name" value="cupin_7S_vicilin-like_N"/>
    <property type="match status" value="1"/>
</dbReference>
<dbReference type="FunFam" id="2.60.120.10:FF:000145">
    <property type="entry name" value="Vicilin-like antimicrobial peptides 2-2"/>
    <property type="match status" value="1"/>
</dbReference>
<dbReference type="FunFam" id="2.60.120.10:FF:000173">
    <property type="entry name" value="Vicilin-like antimicrobial peptides 2-3"/>
    <property type="match status" value="1"/>
</dbReference>
<dbReference type="Gene3D" id="2.60.120.10">
    <property type="entry name" value="Jelly Rolls"/>
    <property type="match status" value="2"/>
</dbReference>
<dbReference type="InterPro" id="IPR006045">
    <property type="entry name" value="Cupin_1"/>
</dbReference>
<dbReference type="InterPro" id="IPR014710">
    <property type="entry name" value="RmlC-like_jellyroll"/>
</dbReference>
<dbReference type="InterPro" id="IPR011051">
    <property type="entry name" value="RmlC_Cupin_sf"/>
</dbReference>
<dbReference type="InterPro" id="IPR050253">
    <property type="entry name" value="Seed_Storage-Functional"/>
</dbReference>
<dbReference type="PANTHER" id="PTHR31189:SF13">
    <property type="entry name" value="CUPINCIN"/>
    <property type="match status" value="1"/>
</dbReference>
<dbReference type="PANTHER" id="PTHR31189">
    <property type="entry name" value="OS03G0336100 PROTEIN-RELATED"/>
    <property type="match status" value="1"/>
</dbReference>
<dbReference type="Pfam" id="PF00190">
    <property type="entry name" value="Cupin_1"/>
    <property type="match status" value="2"/>
</dbReference>
<dbReference type="SMART" id="SM00835">
    <property type="entry name" value="Cupin_1"/>
    <property type="match status" value="2"/>
</dbReference>
<dbReference type="SUPFAM" id="SSF51182">
    <property type="entry name" value="RmlC-like cupins"/>
    <property type="match status" value="2"/>
</dbReference>
<sequence>MAKKKTSSSMARSQLAALLISLCFLSLASNAVGWSRRGEREEEDERRRHGGEGGRPYHFGEESFRHWTRTRHGRFSVLERFPDEQVVGAAVGGYRVAVLEAAPRAFLQPSHYDADEVFYVKEGEGVIVLLREGRKESFCVREGDAMVIPAGAIVYSANTHSSKWFRVVMLLNPVSTPGHFEEYFPVGGDRPESFFSAFSDDVLQAAFNTRREELEKVFERQREGGEITTAPEEQIRELSKSCSRGGGGGSGSEWEIKPSSLTGKSPYFSNNHGKLFELTGDECRHLKKLDLQIGLANITRGSMIAPNYNTRATKLAVVLQGSGYFEMACPHVSGGGSSERREREREHGRRREEEQGEEEHGERGEKARRYHKVRAQVREGSVIVIPASHPATIVASEGESLAVVCFFVGANHDEKVFLAGRNSPLRQLDDPAKKLVFGGSAAREADRVLAAQPEQILLRGPHGRGSVSDM</sequence>
<organism>
    <name type="scientific">Oryza sativa subsp. indica</name>
    <name type="common">Rice</name>
    <dbReference type="NCBI Taxonomy" id="39946"/>
    <lineage>
        <taxon>Eukaryota</taxon>
        <taxon>Viridiplantae</taxon>
        <taxon>Streptophyta</taxon>
        <taxon>Embryophyta</taxon>
        <taxon>Tracheophyta</taxon>
        <taxon>Spermatophyta</taxon>
        <taxon>Magnoliopsida</taxon>
        <taxon>Liliopsida</taxon>
        <taxon>Poales</taxon>
        <taxon>Poaceae</taxon>
        <taxon>BOP clade</taxon>
        <taxon>Oryzoideae</taxon>
        <taxon>Oryzeae</taxon>
        <taxon>Oryzinae</taxon>
        <taxon>Oryza</taxon>
        <taxon>Oryza sativa</taxon>
    </lineage>
</organism>
<protein>
    <recommendedName>
        <fullName evidence="6">Cupincin</fullName>
        <ecNumber evidence="7">3.4.-.-</ecNumber>
    </recommendedName>
    <alternativeName>
        <fullName evidence="7">52 kDa globulin-like protein</fullName>
    </alternativeName>
    <allergenName>Ory s NRA</allergenName>
</protein>
<accession>B8AL97</accession>
<evidence type="ECO:0000255" key="1"/>
<evidence type="ECO:0000255" key="2">
    <source>
        <dbReference type="PROSITE-ProRule" id="PRU00498"/>
    </source>
</evidence>
<evidence type="ECO:0000256" key="3">
    <source>
        <dbReference type="SAM" id="MobiDB-lite"/>
    </source>
</evidence>
<evidence type="ECO:0000269" key="4">
    <source>
    </source>
</evidence>
<evidence type="ECO:0000269" key="5">
    <source>
    </source>
</evidence>
<evidence type="ECO:0000303" key="6">
    <source>
    </source>
</evidence>
<evidence type="ECO:0000305" key="7"/>
<evidence type="ECO:0000305" key="8">
    <source>
    </source>
</evidence>
<evidence type="ECO:0000312" key="9">
    <source>
        <dbReference type="EMBL" id="EEC76319.1"/>
    </source>
</evidence>
<name>CUCIN_ORYSI</name>
<keyword id="KW-0020">Allergen</keyword>
<keyword id="KW-0903">Direct protein sequencing</keyword>
<keyword id="KW-0325">Glycoprotein</keyword>
<keyword id="KW-0378">Hydrolase</keyword>
<keyword id="KW-0479">Metal-binding</keyword>
<keyword id="KW-0482">Metalloprotease</keyword>
<keyword id="KW-0645">Protease</keyword>
<keyword id="KW-1185">Reference proteome</keyword>
<keyword id="KW-0964">Secreted</keyword>
<keyword id="KW-0708">Seed storage protein</keyword>
<keyword id="KW-0732">Signal</keyword>
<keyword id="KW-0758">Storage protein</keyword>
<keyword id="KW-0862">Zinc</keyword>
<gene>
    <name evidence="9" type="ORF">OsI_13867</name>
</gene>
<reference key="1">
    <citation type="journal article" date="2005" name="PLoS Biol.">
        <title>The genomes of Oryza sativa: a history of duplications.</title>
        <authorList>
            <person name="Yu J."/>
            <person name="Wang J."/>
            <person name="Lin W."/>
            <person name="Li S."/>
            <person name="Li H."/>
            <person name="Zhou J."/>
            <person name="Ni P."/>
            <person name="Dong W."/>
            <person name="Hu S."/>
            <person name="Zeng C."/>
            <person name="Zhang J."/>
            <person name="Zhang Y."/>
            <person name="Li R."/>
            <person name="Xu Z."/>
            <person name="Li S."/>
            <person name="Li X."/>
            <person name="Zheng H."/>
            <person name="Cong L."/>
            <person name="Lin L."/>
            <person name="Yin J."/>
            <person name="Geng J."/>
            <person name="Li G."/>
            <person name="Shi J."/>
            <person name="Liu J."/>
            <person name="Lv H."/>
            <person name="Li J."/>
            <person name="Wang J."/>
            <person name="Deng Y."/>
            <person name="Ran L."/>
            <person name="Shi X."/>
            <person name="Wang X."/>
            <person name="Wu Q."/>
            <person name="Li C."/>
            <person name="Ren X."/>
            <person name="Wang J."/>
            <person name="Wang X."/>
            <person name="Li D."/>
            <person name="Liu D."/>
            <person name="Zhang X."/>
            <person name="Ji Z."/>
            <person name="Zhao W."/>
            <person name="Sun Y."/>
            <person name="Zhang Z."/>
            <person name="Bao J."/>
            <person name="Han Y."/>
            <person name="Dong L."/>
            <person name="Ji J."/>
            <person name="Chen P."/>
            <person name="Wu S."/>
            <person name="Liu J."/>
            <person name="Xiao Y."/>
            <person name="Bu D."/>
            <person name="Tan J."/>
            <person name="Yang L."/>
            <person name="Ye C."/>
            <person name="Zhang J."/>
            <person name="Xu J."/>
            <person name="Zhou Y."/>
            <person name="Yu Y."/>
            <person name="Zhang B."/>
            <person name="Zhuang S."/>
            <person name="Wei H."/>
            <person name="Liu B."/>
            <person name="Lei M."/>
            <person name="Yu H."/>
            <person name="Li Y."/>
            <person name="Xu H."/>
            <person name="Wei S."/>
            <person name="He X."/>
            <person name="Fang L."/>
            <person name="Zhang Z."/>
            <person name="Zhang Y."/>
            <person name="Huang X."/>
            <person name="Su Z."/>
            <person name="Tong W."/>
            <person name="Li J."/>
            <person name="Tong Z."/>
            <person name="Li S."/>
            <person name="Ye J."/>
            <person name="Wang L."/>
            <person name="Fang L."/>
            <person name="Lei T."/>
            <person name="Chen C.-S."/>
            <person name="Chen H.-C."/>
            <person name="Xu Z."/>
            <person name="Li H."/>
            <person name="Huang H."/>
            <person name="Zhang F."/>
            <person name="Xu H."/>
            <person name="Li N."/>
            <person name="Zhao C."/>
            <person name="Li S."/>
            <person name="Dong L."/>
            <person name="Huang Y."/>
            <person name="Li L."/>
            <person name="Xi Y."/>
            <person name="Qi Q."/>
            <person name="Li W."/>
            <person name="Zhang B."/>
            <person name="Hu W."/>
            <person name="Zhang Y."/>
            <person name="Tian X."/>
            <person name="Jiao Y."/>
            <person name="Liang X."/>
            <person name="Jin J."/>
            <person name="Gao L."/>
            <person name="Zheng W."/>
            <person name="Hao B."/>
            <person name="Liu S.-M."/>
            <person name="Wang W."/>
            <person name="Yuan L."/>
            <person name="Cao M."/>
            <person name="McDermott J."/>
            <person name="Samudrala R."/>
            <person name="Wang J."/>
            <person name="Wong G.K.-S."/>
            <person name="Yang H."/>
        </authorList>
    </citation>
    <scope>NUCLEOTIDE SEQUENCE [LARGE SCALE GENOMIC DNA]</scope>
    <source>
        <strain>cv. 93-11</strain>
    </source>
</reference>
<reference key="2">
    <citation type="journal article" date="2013" name="J. Proteome Res.">
        <title>MucoRice-cholera toxin B-subunit, a rice-based oral cholera vaccine, down-regulates the expression of alpha-amylase/trypsin inhibitor-like protein family as major rice allergens.</title>
        <authorList>
            <person name="Kurokawa S."/>
            <person name="Nakamura R."/>
            <person name="Mejima M."/>
            <person name="Kozuka-Hata H."/>
            <person name="Kuroda M."/>
            <person name="Takeyama N."/>
            <person name="Oyama M."/>
            <person name="Satoh S."/>
            <person name="Kiyono H."/>
            <person name="Masumura T."/>
            <person name="Teshima R."/>
            <person name="Yuki Y."/>
        </authorList>
    </citation>
    <scope>IDENTIFICATION BY MASS SPECTROMETRY</scope>
    <scope>ALLERGEN</scope>
</reference>
<reference key="3">
    <citation type="journal article" date="2016" name="PLoS ONE">
        <title>Cupincin: A unique protease purified from rice (Oryza sativa L.) bran is a new member of the cupin superfamily.</title>
        <authorList>
            <person name="Sreedhar R."/>
            <person name="Kaul Tiku P."/>
        </authorList>
    </citation>
    <scope>PROTEIN SEQUENCE OF 35-42; 222-226 AND 351-356</scope>
    <scope>IDENTIFICATION BY MASS SPECTROMETRY</scope>
    <scope>FUNCTION</scope>
    <scope>BIOPHYSICOCHEMICAL PROPERTIES</scope>
    <scope>COFACTOR</scope>
    <scope>SUBUNIT</scope>
    <source>
        <strain>cv. IR64</strain>
    </source>
</reference>
<proteinExistence type="evidence at protein level"/>
<feature type="signal peptide" evidence="5">
    <location>
        <begin position="1"/>
        <end position="34"/>
    </location>
</feature>
<feature type="chain" id="PRO_5002864708" description="Cupincin">
    <location>
        <begin position="35"/>
        <end position="470"/>
    </location>
</feature>
<feature type="domain" description="Cupin type-1 1" evidence="1">
    <location>
        <begin position="57"/>
        <end position="215"/>
    </location>
</feature>
<feature type="domain" description="Cupin type-1 2" evidence="1">
    <location>
        <begin position="259"/>
        <end position="445"/>
    </location>
</feature>
<feature type="region of interest" description="Disordered" evidence="3">
    <location>
        <begin position="36"/>
        <end position="57"/>
    </location>
</feature>
<feature type="region of interest" description="Disordered" evidence="3">
    <location>
        <begin position="240"/>
        <end position="261"/>
    </location>
</feature>
<feature type="region of interest" description="Disordered" evidence="3">
    <location>
        <begin position="330"/>
        <end position="368"/>
    </location>
</feature>
<feature type="compositionally biased region" description="Basic and acidic residues" evidence="3">
    <location>
        <begin position="36"/>
        <end position="52"/>
    </location>
</feature>
<feature type="compositionally biased region" description="Basic and acidic residues" evidence="3">
    <location>
        <begin position="338"/>
        <end position="367"/>
    </location>
</feature>
<feature type="binding site" evidence="8">
    <location>
        <position position="347"/>
    </location>
    <ligand>
        <name>Zn(2+)</name>
        <dbReference type="ChEBI" id="CHEBI:29105"/>
        <note>catalytic</note>
    </ligand>
</feature>
<feature type="binding site" evidence="8">
    <location>
        <position position="352"/>
    </location>
    <ligand>
        <name>Zn(2+)</name>
        <dbReference type="ChEBI" id="CHEBI:29105"/>
        <note>catalytic</note>
    </ligand>
</feature>
<feature type="binding site" evidence="8">
    <location>
        <position position="360"/>
    </location>
    <ligand>
        <name>Zn(2+)</name>
        <dbReference type="ChEBI" id="CHEBI:29105"/>
        <note>catalytic</note>
    </ligand>
</feature>
<feature type="glycosylation site" description="N-linked (GlcNAc...) asparagine" evidence="2">
    <location>
        <position position="297"/>
    </location>
</feature>